<accession>A3N3S8</accession>
<sequence>MPELPEVETSLRGVEPYLHGKIIKQIVVRTQKLRWAVSDELQHMQGAKIVALSRRAKYLILHTTQGDILIHLGMSGSLGILQENQQPAGKHDHVDLITQDGMVLRYNDPRKFGCWLWTKNAEQHELITRLGPEPLSESFTAAYLFARSRNKTVAVKNFIMNNDIVVGVGNIYACESLFMAELHPELAAQNLTEKQCERLVKVIKEVLAKAIIQGGTTLKDFIQPDGKPGYFAQVLQVYGRKDEACNDCGTIIEAKVIGQRNSYFCPHCQMLPR</sequence>
<proteinExistence type="inferred from homology"/>
<reference key="1">
    <citation type="journal article" date="2008" name="J. Bacteriol.">
        <title>The complete genome sequence of Actinobacillus pleuropneumoniae L20 (serotype 5b).</title>
        <authorList>
            <person name="Foote S.J."/>
            <person name="Bosse J.T."/>
            <person name="Bouevitch A.B."/>
            <person name="Langford P.R."/>
            <person name="Young N.M."/>
            <person name="Nash J.H.E."/>
        </authorList>
    </citation>
    <scope>NUCLEOTIDE SEQUENCE [LARGE SCALE GENOMIC DNA]</scope>
    <source>
        <strain>L20</strain>
    </source>
</reference>
<organism>
    <name type="scientific">Actinobacillus pleuropneumoniae serotype 5b (strain L20)</name>
    <dbReference type="NCBI Taxonomy" id="416269"/>
    <lineage>
        <taxon>Bacteria</taxon>
        <taxon>Pseudomonadati</taxon>
        <taxon>Pseudomonadota</taxon>
        <taxon>Gammaproteobacteria</taxon>
        <taxon>Pasteurellales</taxon>
        <taxon>Pasteurellaceae</taxon>
        <taxon>Actinobacillus</taxon>
    </lineage>
</organism>
<dbReference type="EC" id="3.2.2.23" evidence="2"/>
<dbReference type="EC" id="4.2.99.18" evidence="2"/>
<dbReference type="EMBL" id="CP000569">
    <property type="protein sequence ID" value="ABN75064.1"/>
    <property type="molecule type" value="Genomic_DNA"/>
</dbReference>
<dbReference type="RefSeq" id="WP_009874642.1">
    <property type="nucleotide sequence ID" value="NC_009053.1"/>
</dbReference>
<dbReference type="SMR" id="A3N3S8"/>
<dbReference type="STRING" id="416269.APL_1990"/>
<dbReference type="EnsemblBacteria" id="ABN75064">
    <property type="protein sequence ID" value="ABN75064"/>
    <property type="gene ID" value="APL_1990"/>
</dbReference>
<dbReference type="KEGG" id="apl:APL_1990"/>
<dbReference type="PATRIC" id="fig|416269.6.peg.2073"/>
<dbReference type="eggNOG" id="COG0266">
    <property type="taxonomic scope" value="Bacteria"/>
</dbReference>
<dbReference type="HOGENOM" id="CLU_038423_1_1_6"/>
<dbReference type="Proteomes" id="UP000001432">
    <property type="component" value="Chromosome"/>
</dbReference>
<dbReference type="GO" id="GO:0034039">
    <property type="term" value="F:8-oxo-7,8-dihydroguanine DNA N-glycosylase activity"/>
    <property type="evidence" value="ECO:0007669"/>
    <property type="project" value="TreeGrafter"/>
</dbReference>
<dbReference type="GO" id="GO:0140078">
    <property type="term" value="F:class I DNA-(apurinic or apyrimidinic site) endonuclease activity"/>
    <property type="evidence" value="ECO:0007669"/>
    <property type="project" value="UniProtKB-EC"/>
</dbReference>
<dbReference type="GO" id="GO:0003684">
    <property type="term" value="F:damaged DNA binding"/>
    <property type="evidence" value="ECO:0007669"/>
    <property type="project" value="InterPro"/>
</dbReference>
<dbReference type="GO" id="GO:0008270">
    <property type="term" value="F:zinc ion binding"/>
    <property type="evidence" value="ECO:0007669"/>
    <property type="project" value="UniProtKB-UniRule"/>
</dbReference>
<dbReference type="GO" id="GO:0006284">
    <property type="term" value="P:base-excision repair"/>
    <property type="evidence" value="ECO:0007669"/>
    <property type="project" value="InterPro"/>
</dbReference>
<dbReference type="CDD" id="cd08966">
    <property type="entry name" value="EcFpg-like_N"/>
    <property type="match status" value="1"/>
</dbReference>
<dbReference type="FunFam" id="1.10.8.50:FF:000003">
    <property type="entry name" value="Formamidopyrimidine-DNA glycosylase"/>
    <property type="match status" value="1"/>
</dbReference>
<dbReference type="FunFam" id="3.20.190.10:FF:000001">
    <property type="entry name" value="Formamidopyrimidine-DNA glycosylase"/>
    <property type="match status" value="1"/>
</dbReference>
<dbReference type="Gene3D" id="1.10.8.50">
    <property type="match status" value="1"/>
</dbReference>
<dbReference type="Gene3D" id="3.20.190.10">
    <property type="entry name" value="MutM-like, N-terminal"/>
    <property type="match status" value="1"/>
</dbReference>
<dbReference type="HAMAP" id="MF_00103">
    <property type="entry name" value="Fapy_DNA_glycosyl"/>
    <property type="match status" value="1"/>
</dbReference>
<dbReference type="InterPro" id="IPR015886">
    <property type="entry name" value="DNA_glyclase/AP_lyase_DNA-bd"/>
</dbReference>
<dbReference type="InterPro" id="IPR015887">
    <property type="entry name" value="DNA_glyclase_Znf_dom_DNA_BS"/>
</dbReference>
<dbReference type="InterPro" id="IPR020629">
    <property type="entry name" value="Formamido-pyr_DNA_Glyclase"/>
</dbReference>
<dbReference type="InterPro" id="IPR012319">
    <property type="entry name" value="FPG_cat"/>
</dbReference>
<dbReference type="InterPro" id="IPR035937">
    <property type="entry name" value="MutM-like_N-ter"/>
</dbReference>
<dbReference type="InterPro" id="IPR010979">
    <property type="entry name" value="Ribosomal_uS13-like_H2TH"/>
</dbReference>
<dbReference type="InterPro" id="IPR000214">
    <property type="entry name" value="Znf_DNA_glyclase/AP_lyase"/>
</dbReference>
<dbReference type="InterPro" id="IPR010663">
    <property type="entry name" value="Znf_FPG/IleRS"/>
</dbReference>
<dbReference type="NCBIfam" id="TIGR00577">
    <property type="entry name" value="fpg"/>
    <property type="match status" value="1"/>
</dbReference>
<dbReference type="NCBIfam" id="NF002211">
    <property type="entry name" value="PRK01103.1"/>
    <property type="match status" value="1"/>
</dbReference>
<dbReference type="PANTHER" id="PTHR22993">
    <property type="entry name" value="FORMAMIDOPYRIMIDINE-DNA GLYCOSYLASE"/>
    <property type="match status" value="1"/>
</dbReference>
<dbReference type="PANTHER" id="PTHR22993:SF9">
    <property type="entry name" value="FORMAMIDOPYRIMIDINE-DNA GLYCOSYLASE"/>
    <property type="match status" value="1"/>
</dbReference>
<dbReference type="Pfam" id="PF01149">
    <property type="entry name" value="Fapy_DNA_glyco"/>
    <property type="match status" value="1"/>
</dbReference>
<dbReference type="Pfam" id="PF06831">
    <property type="entry name" value="H2TH"/>
    <property type="match status" value="1"/>
</dbReference>
<dbReference type="Pfam" id="PF06827">
    <property type="entry name" value="zf-FPG_IleRS"/>
    <property type="match status" value="1"/>
</dbReference>
<dbReference type="SMART" id="SM00898">
    <property type="entry name" value="Fapy_DNA_glyco"/>
    <property type="match status" value="1"/>
</dbReference>
<dbReference type="SMART" id="SM01232">
    <property type="entry name" value="H2TH"/>
    <property type="match status" value="1"/>
</dbReference>
<dbReference type="SUPFAM" id="SSF57716">
    <property type="entry name" value="Glucocorticoid receptor-like (DNA-binding domain)"/>
    <property type="match status" value="1"/>
</dbReference>
<dbReference type="SUPFAM" id="SSF81624">
    <property type="entry name" value="N-terminal domain of MutM-like DNA repair proteins"/>
    <property type="match status" value="1"/>
</dbReference>
<dbReference type="SUPFAM" id="SSF46946">
    <property type="entry name" value="S13-like H2TH domain"/>
    <property type="match status" value="1"/>
</dbReference>
<dbReference type="PROSITE" id="PS51068">
    <property type="entry name" value="FPG_CAT"/>
    <property type="match status" value="1"/>
</dbReference>
<dbReference type="PROSITE" id="PS01242">
    <property type="entry name" value="ZF_FPG_1"/>
    <property type="match status" value="1"/>
</dbReference>
<dbReference type="PROSITE" id="PS51066">
    <property type="entry name" value="ZF_FPG_2"/>
    <property type="match status" value="1"/>
</dbReference>
<gene>
    <name evidence="2" type="primary">mutM</name>
    <name evidence="2" type="synonym">fpg</name>
    <name type="ordered locus">APL_1990</name>
</gene>
<name>FPG_ACTP2</name>
<feature type="initiator methionine" description="Removed" evidence="1">
    <location>
        <position position="1"/>
    </location>
</feature>
<feature type="chain" id="PRO_1000008669" description="Formamidopyrimidine-DNA glycosylase">
    <location>
        <begin position="2"/>
        <end position="273"/>
    </location>
</feature>
<feature type="zinc finger region" description="FPG-type" evidence="2">
    <location>
        <begin position="236"/>
        <end position="270"/>
    </location>
</feature>
<feature type="active site" description="Schiff-base intermediate with DNA" evidence="2">
    <location>
        <position position="2"/>
    </location>
</feature>
<feature type="active site" description="Proton donor" evidence="2">
    <location>
        <position position="3"/>
    </location>
</feature>
<feature type="active site" description="Proton donor; for beta-elimination activity" evidence="2">
    <location>
        <position position="57"/>
    </location>
</feature>
<feature type="active site" description="Proton donor; for delta-elimination activity" evidence="2">
    <location>
        <position position="260"/>
    </location>
</feature>
<feature type="binding site" evidence="2">
    <location>
        <position position="91"/>
    </location>
    <ligand>
        <name>DNA</name>
        <dbReference type="ChEBI" id="CHEBI:16991"/>
    </ligand>
</feature>
<feature type="binding site" evidence="2">
    <location>
        <position position="110"/>
    </location>
    <ligand>
        <name>DNA</name>
        <dbReference type="ChEBI" id="CHEBI:16991"/>
    </ligand>
</feature>
<feature type="binding site" evidence="2">
    <location>
        <position position="151"/>
    </location>
    <ligand>
        <name>DNA</name>
        <dbReference type="ChEBI" id="CHEBI:16991"/>
    </ligand>
</feature>
<protein>
    <recommendedName>
        <fullName evidence="2">Formamidopyrimidine-DNA glycosylase</fullName>
        <shortName evidence="2">Fapy-DNA glycosylase</shortName>
        <ecNumber evidence="2">3.2.2.23</ecNumber>
    </recommendedName>
    <alternativeName>
        <fullName evidence="2">DNA-(apurinic or apyrimidinic site) lyase MutM</fullName>
        <shortName evidence="2">AP lyase MutM</shortName>
        <ecNumber evidence="2">4.2.99.18</ecNumber>
    </alternativeName>
</protein>
<evidence type="ECO:0000250" key="1"/>
<evidence type="ECO:0000255" key="2">
    <source>
        <dbReference type="HAMAP-Rule" id="MF_00103"/>
    </source>
</evidence>
<keyword id="KW-0227">DNA damage</keyword>
<keyword id="KW-0234">DNA repair</keyword>
<keyword id="KW-0238">DNA-binding</keyword>
<keyword id="KW-0326">Glycosidase</keyword>
<keyword id="KW-0378">Hydrolase</keyword>
<keyword id="KW-0456">Lyase</keyword>
<keyword id="KW-0479">Metal-binding</keyword>
<keyword id="KW-0511">Multifunctional enzyme</keyword>
<keyword id="KW-1185">Reference proteome</keyword>
<keyword id="KW-0862">Zinc</keyword>
<keyword id="KW-0863">Zinc-finger</keyword>
<comment type="function">
    <text evidence="2">Involved in base excision repair of DNA damaged by oxidation or by mutagenic agents. Acts as a DNA glycosylase that recognizes and removes damaged bases. Has a preference for oxidized purines, such as 7,8-dihydro-8-oxoguanine (8-oxoG). Has AP (apurinic/apyrimidinic) lyase activity and introduces nicks in the DNA strand. Cleaves the DNA backbone by beta-delta elimination to generate a single-strand break at the site of the removed base with both 3'- and 5'-phosphates.</text>
</comment>
<comment type="catalytic activity">
    <reaction evidence="2">
        <text>Hydrolysis of DNA containing ring-opened 7-methylguanine residues, releasing 2,6-diamino-4-hydroxy-5-(N-methyl)formamidopyrimidine.</text>
        <dbReference type="EC" id="3.2.2.23"/>
    </reaction>
</comment>
<comment type="catalytic activity">
    <reaction evidence="2">
        <text>2'-deoxyribonucleotide-(2'-deoxyribose 5'-phosphate)-2'-deoxyribonucleotide-DNA = a 3'-end 2'-deoxyribonucleotide-(2,3-dehydro-2,3-deoxyribose 5'-phosphate)-DNA + a 5'-end 5'-phospho-2'-deoxyribonucleoside-DNA + H(+)</text>
        <dbReference type="Rhea" id="RHEA:66592"/>
        <dbReference type="Rhea" id="RHEA-COMP:13180"/>
        <dbReference type="Rhea" id="RHEA-COMP:16897"/>
        <dbReference type="Rhea" id="RHEA-COMP:17067"/>
        <dbReference type="ChEBI" id="CHEBI:15378"/>
        <dbReference type="ChEBI" id="CHEBI:136412"/>
        <dbReference type="ChEBI" id="CHEBI:157695"/>
        <dbReference type="ChEBI" id="CHEBI:167181"/>
        <dbReference type="EC" id="4.2.99.18"/>
    </reaction>
</comment>
<comment type="cofactor">
    <cofactor evidence="2">
        <name>Zn(2+)</name>
        <dbReference type="ChEBI" id="CHEBI:29105"/>
    </cofactor>
    <text evidence="2">Binds 1 zinc ion per subunit.</text>
</comment>
<comment type="subunit">
    <text evidence="2">Monomer.</text>
</comment>
<comment type="similarity">
    <text evidence="2">Belongs to the FPG family.</text>
</comment>